<keyword id="KW-0963">Cytoplasm</keyword>
<keyword id="KW-0804">Transcription</keyword>
<keyword id="KW-0805">Transcription regulation</keyword>
<evidence type="ECO:0000255" key="1">
    <source>
        <dbReference type="HAMAP-Rule" id="MF_01181"/>
    </source>
</evidence>
<accession>Q31U02</accession>
<feature type="chain" id="PRO_0000268887" description="Regulator of sigma D">
    <location>
        <begin position="1"/>
        <end position="158"/>
    </location>
</feature>
<sequence>MLNQLDNLTERVRGSNKLVDRWLHVRKHLLVAYYNLVGIKPGKESYMRLNEKALDDFCQSLVDYLSAGHFSIYERILHKLEGNGQLARAAKIWPQLEANTQQIMDYYDSSLETAIDHDNYLEFQKVLSDIGEALEARFVLEDKLILLVLDAARVKHPA</sequence>
<dbReference type="EMBL" id="CP000036">
    <property type="protein sequence ID" value="ABB68456.1"/>
    <property type="molecule type" value="Genomic_DNA"/>
</dbReference>
<dbReference type="RefSeq" id="WP_000934301.1">
    <property type="nucleotide sequence ID" value="NC_007613.1"/>
</dbReference>
<dbReference type="SMR" id="Q31U02"/>
<dbReference type="KEGG" id="sbo:SBO_4016"/>
<dbReference type="HOGENOM" id="CLU_142729_0_0_6"/>
<dbReference type="Proteomes" id="UP000007067">
    <property type="component" value="Chromosome"/>
</dbReference>
<dbReference type="GO" id="GO:0005737">
    <property type="term" value="C:cytoplasm"/>
    <property type="evidence" value="ECO:0007669"/>
    <property type="project" value="UniProtKB-SubCell"/>
</dbReference>
<dbReference type="GO" id="GO:0006355">
    <property type="term" value="P:regulation of DNA-templated transcription"/>
    <property type="evidence" value="ECO:0007669"/>
    <property type="project" value="InterPro"/>
</dbReference>
<dbReference type="FunFam" id="1.20.120.1370:FF:000001">
    <property type="entry name" value="Regulator of sigma D"/>
    <property type="match status" value="1"/>
</dbReference>
<dbReference type="Gene3D" id="1.20.120.1370">
    <property type="entry name" value="Regulator of RNA polymerase sigma(70) subunit, domain 4"/>
    <property type="match status" value="1"/>
</dbReference>
<dbReference type="HAMAP" id="MF_01181">
    <property type="entry name" value="Rsd"/>
    <property type="match status" value="1"/>
</dbReference>
<dbReference type="InterPro" id="IPR038309">
    <property type="entry name" value="Rsd/AlgQ_sf"/>
</dbReference>
<dbReference type="InterPro" id="IPR023785">
    <property type="entry name" value="Sigma70_reg_Rsd"/>
</dbReference>
<dbReference type="InterPro" id="IPR007448">
    <property type="entry name" value="Sigma70_reg_Rsd_AlgQ"/>
</dbReference>
<dbReference type="NCBIfam" id="NF008723">
    <property type="entry name" value="PRK11718.1"/>
    <property type="match status" value="1"/>
</dbReference>
<dbReference type="Pfam" id="PF04353">
    <property type="entry name" value="Rsd_AlgQ"/>
    <property type="match status" value="1"/>
</dbReference>
<dbReference type="PIRSF" id="PIRSF016548">
    <property type="entry name" value="Rsd_AlgQ"/>
    <property type="match status" value="1"/>
</dbReference>
<comment type="function">
    <text evidence="1">Binds RpoD and negatively regulates RpoD-mediated transcription activation by preventing the interaction between the primary sigma factor RpoD with the catalytic core of the RNA polymerase and with promoter DNA. May be involved in replacement of the RNA polymerase sigma subunit from RpoD to RpoS during the transition from exponential growth to the stationary phase.</text>
</comment>
<comment type="subunit">
    <text evidence="1">Interacts with RpoD.</text>
</comment>
<comment type="subcellular location">
    <subcellularLocation>
        <location evidence="1">Cytoplasm</location>
    </subcellularLocation>
</comment>
<comment type="similarity">
    <text evidence="1">Belongs to the Rsd/AlgQ family.</text>
</comment>
<protein>
    <recommendedName>
        <fullName evidence="1">Regulator of sigma D</fullName>
    </recommendedName>
</protein>
<reference key="1">
    <citation type="journal article" date="2005" name="Nucleic Acids Res.">
        <title>Genome dynamics and diversity of Shigella species, the etiologic agents of bacillary dysentery.</title>
        <authorList>
            <person name="Yang F."/>
            <person name="Yang J."/>
            <person name="Zhang X."/>
            <person name="Chen L."/>
            <person name="Jiang Y."/>
            <person name="Yan Y."/>
            <person name="Tang X."/>
            <person name="Wang J."/>
            <person name="Xiong Z."/>
            <person name="Dong J."/>
            <person name="Xue Y."/>
            <person name="Zhu Y."/>
            <person name="Xu X."/>
            <person name="Sun L."/>
            <person name="Chen S."/>
            <person name="Nie H."/>
            <person name="Peng J."/>
            <person name="Xu J."/>
            <person name="Wang Y."/>
            <person name="Yuan Z."/>
            <person name="Wen Y."/>
            <person name="Yao Z."/>
            <person name="Shen Y."/>
            <person name="Qiang B."/>
            <person name="Hou Y."/>
            <person name="Yu J."/>
            <person name="Jin Q."/>
        </authorList>
    </citation>
    <scope>NUCLEOTIDE SEQUENCE [LARGE SCALE GENOMIC DNA]</scope>
    <source>
        <strain>Sb227</strain>
    </source>
</reference>
<organism>
    <name type="scientific">Shigella boydii serotype 4 (strain Sb227)</name>
    <dbReference type="NCBI Taxonomy" id="300268"/>
    <lineage>
        <taxon>Bacteria</taxon>
        <taxon>Pseudomonadati</taxon>
        <taxon>Pseudomonadota</taxon>
        <taxon>Gammaproteobacteria</taxon>
        <taxon>Enterobacterales</taxon>
        <taxon>Enterobacteriaceae</taxon>
        <taxon>Shigella</taxon>
    </lineage>
</organism>
<gene>
    <name evidence="1" type="primary">rsd</name>
    <name type="ordered locus">SBO_4016</name>
</gene>
<proteinExistence type="inferred from homology"/>
<name>RSD_SHIBS</name>